<name>PDE6D_DROMO</name>
<feature type="chain" id="PRO_0000363676" description="Probable cGMP 3',5'-cyclic phosphodiesterase subunit delta">
    <location>
        <begin position="1"/>
        <end position="151"/>
    </location>
</feature>
<gene>
    <name evidence="1" type="primary">PrBP</name>
    <name type="ORF">GI18057</name>
</gene>
<evidence type="ECO:0000250" key="1">
    <source>
        <dbReference type="UniProtKB" id="Q9VLJ0"/>
    </source>
</evidence>
<evidence type="ECO:0000255" key="2"/>
<evidence type="ECO:0000312" key="3">
    <source>
        <dbReference type="EMBL" id="EDW13142.1"/>
    </source>
</evidence>
<comment type="subunit">
    <text evidence="1">Interacts with Pde6.</text>
</comment>
<comment type="subcellular location">
    <subcellularLocation>
        <location evidence="1">Nucleus</location>
    </subcellularLocation>
    <subcellularLocation>
        <location evidence="1">Cytoplasm</location>
    </subcellularLocation>
</comment>
<comment type="similarity">
    <text evidence="2">Belongs to the PDE6D/unc-119 family.</text>
</comment>
<organism>
    <name type="scientific">Drosophila mojavensis</name>
    <name type="common">Fruit fly</name>
    <dbReference type="NCBI Taxonomy" id="7230"/>
    <lineage>
        <taxon>Eukaryota</taxon>
        <taxon>Metazoa</taxon>
        <taxon>Ecdysozoa</taxon>
        <taxon>Arthropoda</taxon>
        <taxon>Hexapoda</taxon>
        <taxon>Insecta</taxon>
        <taxon>Pterygota</taxon>
        <taxon>Neoptera</taxon>
        <taxon>Endopterygota</taxon>
        <taxon>Diptera</taxon>
        <taxon>Brachycera</taxon>
        <taxon>Muscomorpha</taxon>
        <taxon>Ephydroidea</taxon>
        <taxon>Drosophilidae</taxon>
        <taxon>Drosophila</taxon>
    </lineage>
</organism>
<protein>
    <recommendedName>
        <fullName>Probable cGMP 3',5'-cyclic phosphodiesterase subunit delta</fullName>
    </recommendedName>
</protein>
<accession>B4KG03</accession>
<sequence length="151" mass="17344">MGSDDLSAGDKIQKGFQINYMILRDADTGKVIWQENKDFSAPDVEHEARVPVKILDMRAVSREINFSTIESMENFRLDQKVLFKGRIMEEWFFEMGFVGANTTNTWQSTIEAAPESQMMPAKVLNGNVTIQTSFYDNEILITKSVVRLYYI</sequence>
<proteinExistence type="inferred from homology"/>
<dbReference type="EMBL" id="CH933807">
    <property type="protein sequence ID" value="EDW13142.1"/>
    <property type="molecule type" value="Genomic_DNA"/>
</dbReference>
<dbReference type="RefSeq" id="XP_002003700.1">
    <property type="nucleotide sequence ID" value="XM_002003664.2"/>
</dbReference>
<dbReference type="SMR" id="B4KG03"/>
<dbReference type="FunCoup" id="B4KG03">
    <property type="interactions" value="1507"/>
</dbReference>
<dbReference type="EnsemblMetazoa" id="FBtr0428414">
    <property type="protein sequence ID" value="FBpp0385959"/>
    <property type="gene ID" value="FBgn0140797"/>
</dbReference>
<dbReference type="EnsemblMetazoa" id="XM_044008683.1">
    <property type="protein sequence ID" value="XP_043864618.1"/>
    <property type="gene ID" value="LOC6577753"/>
</dbReference>
<dbReference type="KEGG" id="dmo:Dmoj_GI18057"/>
<dbReference type="eggNOG" id="KOG4038">
    <property type="taxonomic scope" value="Eukaryota"/>
</dbReference>
<dbReference type="HOGENOM" id="CLU_119682_0_0_1"/>
<dbReference type="InParanoid" id="B4KG03"/>
<dbReference type="OMA" id="STNTWQN"/>
<dbReference type="OrthoDB" id="10248777at2759"/>
<dbReference type="PhylomeDB" id="B4KG03"/>
<dbReference type="Proteomes" id="UP000009192">
    <property type="component" value="Unassembled WGS sequence"/>
</dbReference>
<dbReference type="GO" id="GO:0005737">
    <property type="term" value="C:cytoplasm"/>
    <property type="evidence" value="ECO:0000250"/>
    <property type="project" value="UniProtKB"/>
</dbReference>
<dbReference type="GO" id="GO:0005634">
    <property type="term" value="C:nucleus"/>
    <property type="evidence" value="ECO:0000250"/>
    <property type="project" value="UniProtKB"/>
</dbReference>
<dbReference type="GO" id="GO:0050953">
    <property type="term" value="P:sensory perception of light stimulus"/>
    <property type="evidence" value="ECO:0007669"/>
    <property type="project" value="InterPro"/>
</dbReference>
<dbReference type="FunFam" id="2.70.50.40:FF:000002">
    <property type="entry name" value="Retinal rod rhodopsin-sensitive cGMP 3',5'-cyclic phosphodiesterase subunit delta"/>
    <property type="match status" value="1"/>
</dbReference>
<dbReference type="Gene3D" id="2.70.50.40">
    <property type="entry name" value="GMP phosphodiesterase, delta subunit"/>
    <property type="match status" value="1"/>
</dbReference>
<dbReference type="InterPro" id="IPR014756">
    <property type="entry name" value="Ig_E-set"/>
</dbReference>
<dbReference type="InterPro" id="IPR008015">
    <property type="entry name" value="PDED_dom"/>
</dbReference>
<dbReference type="InterPro" id="IPR037036">
    <property type="entry name" value="PDED_dom_sf"/>
</dbReference>
<dbReference type="InterPro" id="IPR017287">
    <property type="entry name" value="Rhodop-sen_GMP-Pdiesterase_dsu"/>
</dbReference>
<dbReference type="PANTHER" id="PTHR12976">
    <property type="entry name" value="RETINAL ROD RHODOPSIN-SENSITIVE CGMP 3',5'-CYCLIC PHOSPHODIESTERASE DELTA-SUBUNIT"/>
    <property type="match status" value="1"/>
</dbReference>
<dbReference type="PANTHER" id="PTHR12976:SF0">
    <property type="entry name" value="RETINAL ROD RHODOPSIN-SENSITIVE CGMP 3',5'-CYCLIC PHOSPHODIESTERASE SUBUNIT DELTA"/>
    <property type="match status" value="1"/>
</dbReference>
<dbReference type="Pfam" id="PF05351">
    <property type="entry name" value="GMP_PDE_delta"/>
    <property type="match status" value="1"/>
</dbReference>
<dbReference type="PIRSF" id="PIRSF037825">
    <property type="entry name" value="GMP-Pdiesterase_delta"/>
    <property type="match status" value="1"/>
</dbReference>
<dbReference type="SUPFAM" id="SSF81296">
    <property type="entry name" value="E set domains"/>
    <property type="match status" value="1"/>
</dbReference>
<keyword id="KW-0140">cGMP</keyword>
<keyword id="KW-0963">Cytoplasm</keyword>
<keyword id="KW-0539">Nucleus</keyword>
<keyword id="KW-1185">Reference proteome</keyword>
<reference evidence="3" key="1">
    <citation type="journal article" date="2007" name="Nature">
        <title>Evolution of genes and genomes on the Drosophila phylogeny.</title>
        <authorList>
            <consortium name="Drosophila 12 genomes consortium"/>
        </authorList>
    </citation>
    <scope>NUCLEOTIDE SEQUENCE [LARGE SCALE GENOMIC DNA]</scope>
    <source>
        <strain evidence="3">Tucson 15081-1352.22</strain>
    </source>
</reference>